<organism>
    <name type="scientific">Paramagnetospirillum magneticum (strain ATCC 700264 / AMB-1)</name>
    <name type="common">Magnetospirillum magneticum</name>
    <dbReference type="NCBI Taxonomy" id="342108"/>
    <lineage>
        <taxon>Bacteria</taxon>
        <taxon>Pseudomonadati</taxon>
        <taxon>Pseudomonadota</taxon>
        <taxon>Alphaproteobacteria</taxon>
        <taxon>Rhodospirillales</taxon>
        <taxon>Magnetospirillaceae</taxon>
        <taxon>Paramagnetospirillum</taxon>
    </lineage>
</organism>
<gene>
    <name type="ordered locus">amb4503</name>
</gene>
<reference key="1">
    <citation type="journal article" date="2005" name="DNA Res.">
        <title>Complete genome sequence of the facultative anaerobic magnetotactic bacterium Magnetospirillum sp. strain AMB-1.</title>
        <authorList>
            <person name="Matsunaga T."/>
            <person name="Okamura Y."/>
            <person name="Fukuda Y."/>
            <person name="Wahyudi A.T."/>
            <person name="Murase Y."/>
            <person name="Takeyama H."/>
        </authorList>
    </citation>
    <scope>NUCLEOTIDE SEQUENCE [LARGE SCALE GENOMIC DNA]</scope>
    <source>
        <strain>ATCC 700264 / AMB-1</strain>
    </source>
</reference>
<protein>
    <recommendedName>
        <fullName evidence="1">UPF0102 protein amb4503</fullName>
    </recommendedName>
</protein>
<dbReference type="EMBL" id="AP007255">
    <property type="protein sequence ID" value="BAE53307.1"/>
    <property type="molecule type" value="Genomic_DNA"/>
</dbReference>
<dbReference type="RefSeq" id="WP_011386847.1">
    <property type="nucleotide sequence ID" value="NC_007626.1"/>
</dbReference>
<dbReference type="SMR" id="Q2VYL8"/>
<dbReference type="STRING" id="342108.amb4503"/>
<dbReference type="KEGG" id="mag:amb4503"/>
<dbReference type="HOGENOM" id="CLU_115353_0_2_5"/>
<dbReference type="OrthoDB" id="9812968at2"/>
<dbReference type="Proteomes" id="UP000007058">
    <property type="component" value="Chromosome"/>
</dbReference>
<dbReference type="GO" id="GO:0003676">
    <property type="term" value="F:nucleic acid binding"/>
    <property type="evidence" value="ECO:0007669"/>
    <property type="project" value="InterPro"/>
</dbReference>
<dbReference type="Gene3D" id="3.40.1350.10">
    <property type="match status" value="1"/>
</dbReference>
<dbReference type="HAMAP" id="MF_00048">
    <property type="entry name" value="UPF0102"/>
    <property type="match status" value="1"/>
</dbReference>
<dbReference type="InterPro" id="IPR011335">
    <property type="entry name" value="Restrct_endonuc-II-like"/>
</dbReference>
<dbReference type="InterPro" id="IPR011856">
    <property type="entry name" value="tRNA_endonuc-like_dom_sf"/>
</dbReference>
<dbReference type="InterPro" id="IPR003509">
    <property type="entry name" value="UPF0102_YraN-like"/>
</dbReference>
<dbReference type="NCBIfam" id="NF009151">
    <property type="entry name" value="PRK12497.1-5"/>
    <property type="match status" value="1"/>
</dbReference>
<dbReference type="PANTHER" id="PTHR34039">
    <property type="entry name" value="UPF0102 PROTEIN YRAN"/>
    <property type="match status" value="1"/>
</dbReference>
<dbReference type="PANTHER" id="PTHR34039:SF1">
    <property type="entry name" value="UPF0102 PROTEIN YRAN"/>
    <property type="match status" value="1"/>
</dbReference>
<dbReference type="Pfam" id="PF02021">
    <property type="entry name" value="UPF0102"/>
    <property type="match status" value="1"/>
</dbReference>
<dbReference type="SUPFAM" id="SSF52980">
    <property type="entry name" value="Restriction endonuclease-like"/>
    <property type="match status" value="1"/>
</dbReference>
<feature type="chain" id="PRO_0000336198" description="UPF0102 protein amb4503">
    <location>
        <begin position="1"/>
        <end position="129"/>
    </location>
</feature>
<proteinExistence type="inferred from homology"/>
<accession>Q2VYL8</accession>
<evidence type="ECO:0000255" key="1">
    <source>
        <dbReference type="HAMAP-Rule" id="MF_00048"/>
    </source>
</evidence>
<sequence>MNSAPPSRAHQAAQRRGKVAEGLAALWLRLKGYGILAKGLKSGRGSGAGEVDLVARRGDLVAFVEVKSRATLDQAIESLTPFQRQRIERAAAAFLARRPELASCGVRFDMVLVAPWRLPRHIPDAWRID</sequence>
<comment type="similarity">
    <text evidence="1">Belongs to the UPF0102 family.</text>
</comment>
<name>Y4503_PARM1</name>